<gene>
    <name evidence="1" type="primary">atpB</name>
    <name type="ordered locus">SPP_1532</name>
</gene>
<name>ATP6_STRZP</name>
<protein>
    <recommendedName>
        <fullName evidence="1">ATP synthase subunit a</fullName>
    </recommendedName>
    <alternativeName>
        <fullName evidence="1">ATP synthase F0 sector subunit a</fullName>
    </alternativeName>
    <alternativeName>
        <fullName evidence="1">F-ATPase subunit 6</fullName>
    </alternativeName>
</protein>
<accession>C1CLL1</accession>
<sequence>MEESINPIISIGPVIFNLTMLAMTLLIVGVIFVFIYWASRNMTLKPKGKQNVLEYVYDFVIGFTEPNIGSRYMKDYSLFFLCLFLFMVIANNLGLMTKLQTIDGTNWWSSPTANLQYDLTLSFLVILLTHIESVRRRGFKKSIKSFMSPVFVIPMNILEEFTNFLSLALRIFGNIFAGEVMTSLLLLLSHQAIYWYPVAFGANLAWTAFSVFISCIQAYVFTLLTSVYLGNKINIEEE</sequence>
<organism>
    <name type="scientific">Streptococcus pneumoniae (strain P1031)</name>
    <dbReference type="NCBI Taxonomy" id="488223"/>
    <lineage>
        <taxon>Bacteria</taxon>
        <taxon>Bacillati</taxon>
        <taxon>Bacillota</taxon>
        <taxon>Bacilli</taxon>
        <taxon>Lactobacillales</taxon>
        <taxon>Streptococcaceae</taxon>
        <taxon>Streptococcus</taxon>
    </lineage>
</organism>
<keyword id="KW-0066">ATP synthesis</keyword>
<keyword id="KW-1003">Cell membrane</keyword>
<keyword id="KW-0138">CF(0)</keyword>
<keyword id="KW-0375">Hydrogen ion transport</keyword>
<keyword id="KW-0406">Ion transport</keyword>
<keyword id="KW-0472">Membrane</keyword>
<keyword id="KW-0812">Transmembrane</keyword>
<keyword id="KW-1133">Transmembrane helix</keyword>
<keyword id="KW-0813">Transport</keyword>
<proteinExistence type="inferred from homology"/>
<reference key="1">
    <citation type="journal article" date="2010" name="Genome Biol.">
        <title>Structure and dynamics of the pan-genome of Streptococcus pneumoniae and closely related species.</title>
        <authorList>
            <person name="Donati C."/>
            <person name="Hiller N.L."/>
            <person name="Tettelin H."/>
            <person name="Muzzi A."/>
            <person name="Croucher N.J."/>
            <person name="Angiuoli S.V."/>
            <person name="Oggioni M."/>
            <person name="Dunning Hotopp J.C."/>
            <person name="Hu F.Z."/>
            <person name="Riley D.R."/>
            <person name="Covacci A."/>
            <person name="Mitchell T.J."/>
            <person name="Bentley S.D."/>
            <person name="Kilian M."/>
            <person name="Ehrlich G.D."/>
            <person name="Rappuoli R."/>
            <person name="Moxon E.R."/>
            <person name="Masignani V."/>
        </authorList>
    </citation>
    <scope>NUCLEOTIDE SEQUENCE [LARGE SCALE GENOMIC DNA]</scope>
    <source>
        <strain>P1031</strain>
    </source>
</reference>
<dbReference type="EMBL" id="CP000920">
    <property type="protein sequence ID" value="ACO21581.1"/>
    <property type="molecule type" value="Genomic_DNA"/>
</dbReference>
<dbReference type="RefSeq" id="WP_000392851.1">
    <property type="nucleotide sequence ID" value="NC_012467.1"/>
</dbReference>
<dbReference type="SMR" id="C1CLL1"/>
<dbReference type="GeneID" id="45653248"/>
<dbReference type="KEGG" id="spp:SPP_1532"/>
<dbReference type="HOGENOM" id="CLU_041018_2_3_9"/>
<dbReference type="GO" id="GO:0005886">
    <property type="term" value="C:plasma membrane"/>
    <property type="evidence" value="ECO:0007669"/>
    <property type="project" value="UniProtKB-SubCell"/>
</dbReference>
<dbReference type="GO" id="GO:0045259">
    <property type="term" value="C:proton-transporting ATP synthase complex"/>
    <property type="evidence" value="ECO:0007669"/>
    <property type="project" value="UniProtKB-KW"/>
</dbReference>
<dbReference type="GO" id="GO:0046933">
    <property type="term" value="F:proton-transporting ATP synthase activity, rotational mechanism"/>
    <property type="evidence" value="ECO:0007669"/>
    <property type="project" value="UniProtKB-UniRule"/>
</dbReference>
<dbReference type="GO" id="GO:0042777">
    <property type="term" value="P:proton motive force-driven plasma membrane ATP synthesis"/>
    <property type="evidence" value="ECO:0007669"/>
    <property type="project" value="TreeGrafter"/>
</dbReference>
<dbReference type="CDD" id="cd00310">
    <property type="entry name" value="ATP-synt_Fo_a_6"/>
    <property type="match status" value="1"/>
</dbReference>
<dbReference type="Gene3D" id="1.20.120.220">
    <property type="entry name" value="ATP synthase, F0 complex, subunit A"/>
    <property type="match status" value="1"/>
</dbReference>
<dbReference type="HAMAP" id="MF_01393">
    <property type="entry name" value="ATP_synth_a_bact"/>
    <property type="match status" value="1"/>
</dbReference>
<dbReference type="InterPro" id="IPR045082">
    <property type="entry name" value="ATP_syn_F0_a_bact/chloroplast"/>
</dbReference>
<dbReference type="InterPro" id="IPR000568">
    <property type="entry name" value="ATP_synth_F0_asu"/>
</dbReference>
<dbReference type="InterPro" id="IPR035908">
    <property type="entry name" value="F0_ATP_A_sf"/>
</dbReference>
<dbReference type="NCBIfam" id="TIGR01131">
    <property type="entry name" value="ATP_synt_6_or_A"/>
    <property type="match status" value="1"/>
</dbReference>
<dbReference type="NCBIfam" id="NF004479">
    <property type="entry name" value="PRK05815.1-4"/>
    <property type="match status" value="1"/>
</dbReference>
<dbReference type="PANTHER" id="PTHR42823">
    <property type="entry name" value="ATP SYNTHASE SUBUNIT A, CHLOROPLASTIC"/>
    <property type="match status" value="1"/>
</dbReference>
<dbReference type="PANTHER" id="PTHR42823:SF3">
    <property type="entry name" value="ATP SYNTHASE SUBUNIT A, CHLOROPLASTIC"/>
    <property type="match status" value="1"/>
</dbReference>
<dbReference type="Pfam" id="PF00119">
    <property type="entry name" value="ATP-synt_A"/>
    <property type="match status" value="1"/>
</dbReference>
<dbReference type="PRINTS" id="PR00123">
    <property type="entry name" value="ATPASEA"/>
</dbReference>
<dbReference type="SUPFAM" id="SSF81336">
    <property type="entry name" value="F1F0 ATP synthase subunit A"/>
    <property type="match status" value="1"/>
</dbReference>
<evidence type="ECO:0000255" key="1">
    <source>
        <dbReference type="HAMAP-Rule" id="MF_01393"/>
    </source>
</evidence>
<comment type="function">
    <text evidence="1">Key component of the proton channel; it plays a direct role in the translocation of protons across the membrane.</text>
</comment>
<comment type="subunit">
    <text evidence="1">F-type ATPases have 2 components, CF(1) - the catalytic core - and CF(0) - the membrane proton channel. CF(1) has five subunits: alpha(3), beta(3), gamma(1), delta(1), epsilon(1). CF(0) has three main subunits: a(1), b(2) and c(9-12). The alpha and beta chains form an alternating ring which encloses part of the gamma chain. CF(1) is attached to CF(0) by a central stalk formed by the gamma and epsilon chains, while a peripheral stalk is formed by the delta and b chains.</text>
</comment>
<comment type="subcellular location">
    <subcellularLocation>
        <location evidence="1">Cell membrane</location>
        <topology evidence="1">Multi-pass membrane protein</topology>
    </subcellularLocation>
</comment>
<comment type="similarity">
    <text evidence="1">Belongs to the ATPase A chain family.</text>
</comment>
<feature type="chain" id="PRO_1000184295" description="ATP synthase subunit a">
    <location>
        <begin position="1"/>
        <end position="238"/>
    </location>
</feature>
<feature type="transmembrane region" description="Helical" evidence="1">
    <location>
        <begin position="15"/>
        <end position="35"/>
    </location>
</feature>
<feature type="transmembrane region" description="Helical" evidence="1">
    <location>
        <begin position="76"/>
        <end position="96"/>
    </location>
</feature>
<feature type="transmembrane region" description="Helical" evidence="1">
    <location>
        <begin position="111"/>
        <end position="131"/>
    </location>
</feature>
<feature type="transmembrane region" description="Helical" evidence="1">
    <location>
        <begin position="167"/>
        <end position="187"/>
    </location>
</feature>
<feature type="transmembrane region" description="Helical" evidence="1">
    <location>
        <begin position="208"/>
        <end position="230"/>
    </location>
</feature>